<gene>
    <name evidence="1" type="primary">pyrD</name>
    <name type="ordered locus">Veis_1935</name>
</gene>
<evidence type="ECO:0000255" key="1">
    <source>
        <dbReference type="HAMAP-Rule" id="MF_00225"/>
    </source>
</evidence>
<organism>
    <name type="scientific">Verminephrobacter eiseniae (strain EF01-2)</name>
    <dbReference type="NCBI Taxonomy" id="391735"/>
    <lineage>
        <taxon>Bacteria</taxon>
        <taxon>Pseudomonadati</taxon>
        <taxon>Pseudomonadota</taxon>
        <taxon>Betaproteobacteria</taxon>
        <taxon>Burkholderiales</taxon>
        <taxon>Comamonadaceae</taxon>
        <taxon>Verminephrobacter</taxon>
    </lineage>
</organism>
<accession>A1WJ81</accession>
<name>PYRD_VEREI</name>
<keyword id="KW-1003">Cell membrane</keyword>
<keyword id="KW-0285">Flavoprotein</keyword>
<keyword id="KW-0288">FMN</keyword>
<keyword id="KW-0472">Membrane</keyword>
<keyword id="KW-0560">Oxidoreductase</keyword>
<keyword id="KW-0665">Pyrimidine biosynthesis</keyword>
<keyword id="KW-1185">Reference proteome</keyword>
<comment type="function">
    <text evidence="1">Catalyzes the conversion of dihydroorotate to orotate with quinone as electron acceptor.</text>
</comment>
<comment type="catalytic activity">
    <reaction evidence="1">
        <text>(S)-dihydroorotate + a quinone = orotate + a quinol</text>
        <dbReference type="Rhea" id="RHEA:30187"/>
        <dbReference type="ChEBI" id="CHEBI:24646"/>
        <dbReference type="ChEBI" id="CHEBI:30839"/>
        <dbReference type="ChEBI" id="CHEBI:30864"/>
        <dbReference type="ChEBI" id="CHEBI:132124"/>
        <dbReference type="EC" id="1.3.5.2"/>
    </reaction>
</comment>
<comment type="cofactor">
    <cofactor evidence="1">
        <name>FMN</name>
        <dbReference type="ChEBI" id="CHEBI:58210"/>
    </cofactor>
    <text evidence="1">Binds 1 FMN per subunit.</text>
</comment>
<comment type="pathway">
    <text evidence="1">Pyrimidine metabolism; UMP biosynthesis via de novo pathway; orotate from (S)-dihydroorotate (quinone route): step 1/1.</text>
</comment>
<comment type="subunit">
    <text evidence="1">Monomer.</text>
</comment>
<comment type="subcellular location">
    <subcellularLocation>
        <location evidence="1">Cell membrane</location>
        <topology evidence="1">Peripheral membrane protein</topology>
    </subcellularLocation>
</comment>
<comment type="similarity">
    <text evidence="1">Belongs to the dihydroorotate dehydrogenase family. Type 2 subfamily.</text>
</comment>
<reference key="1">
    <citation type="submission" date="2006-12" db="EMBL/GenBank/DDBJ databases">
        <title>Complete sequence of chromosome 1 of Verminephrobacter eiseniae EF01-2.</title>
        <authorList>
            <person name="Copeland A."/>
            <person name="Lucas S."/>
            <person name="Lapidus A."/>
            <person name="Barry K."/>
            <person name="Detter J.C."/>
            <person name="Glavina del Rio T."/>
            <person name="Dalin E."/>
            <person name="Tice H."/>
            <person name="Pitluck S."/>
            <person name="Chertkov O."/>
            <person name="Brettin T."/>
            <person name="Bruce D."/>
            <person name="Han C."/>
            <person name="Tapia R."/>
            <person name="Gilna P."/>
            <person name="Schmutz J."/>
            <person name="Larimer F."/>
            <person name="Land M."/>
            <person name="Hauser L."/>
            <person name="Kyrpides N."/>
            <person name="Kim E."/>
            <person name="Stahl D."/>
            <person name="Richardson P."/>
        </authorList>
    </citation>
    <scope>NUCLEOTIDE SEQUENCE [LARGE SCALE GENOMIC DNA]</scope>
    <source>
        <strain>EF01-2</strain>
    </source>
</reference>
<sequence length="360" mass="38028">MPLLPYALTRPFLFGLDAEAAHELIIDLLARGQRTPLQWAWCNQTVDDPIELAGLRFPNRVGLAAGLDKNARCIDALGAMGFGFVEAGTVTPQAQPGNPRPRMFRLPEARALINRLGFNNAGLQAFVHNLQQSRLRAAGSALRLGLNIGKNASTPMAQASSDYLACLEGVYPHADYVALNISSPNTQNLRTLQGDAALDHLLGAIAERRATLAARHGRRVPVFVKIAPDLDEAQLSLMAATLQRHGIDGVIATNTTIDRAVVQGQRHAQESGGLSGAPVLQASNQVIGQLRAALGKGFPIIGVGGIMSAEDAVSKIRAGADLVQIYTGLIYEGPALVVQAARAIKAMGGCGPVIALPNRS</sequence>
<proteinExistence type="inferred from homology"/>
<protein>
    <recommendedName>
        <fullName evidence="1">Dihydroorotate dehydrogenase (quinone)</fullName>
        <ecNumber evidence="1">1.3.5.2</ecNumber>
    </recommendedName>
    <alternativeName>
        <fullName evidence="1">DHOdehase</fullName>
        <shortName evidence="1">DHOD</shortName>
        <shortName evidence="1">DHODase</shortName>
    </alternativeName>
    <alternativeName>
        <fullName evidence="1">Dihydroorotate oxidase</fullName>
    </alternativeName>
</protein>
<feature type="chain" id="PRO_1000024241" description="Dihydroorotate dehydrogenase (quinone)">
    <location>
        <begin position="1"/>
        <end position="360"/>
    </location>
</feature>
<feature type="active site" description="Nucleophile" evidence="1">
    <location>
        <position position="183"/>
    </location>
</feature>
<feature type="binding site" evidence="1">
    <location>
        <begin position="65"/>
        <end position="69"/>
    </location>
    <ligand>
        <name>FMN</name>
        <dbReference type="ChEBI" id="CHEBI:58210"/>
    </ligand>
</feature>
<feature type="binding site" evidence="1">
    <location>
        <position position="69"/>
    </location>
    <ligand>
        <name>substrate</name>
    </ligand>
</feature>
<feature type="binding site" evidence="1">
    <location>
        <position position="89"/>
    </location>
    <ligand>
        <name>FMN</name>
        <dbReference type="ChEBI" id="CHEBI:58210"/>
    </ligand>
</feature>
<feature type="binding site" evidence="1">
    <location>
        <begin position="114"/>
        <end position="118"/>
    </location>
    <ligand>
        <name>substrate</name>
    </ligand>
</feature>
<feature type="binding site" evidence="1">
    <location>
        <position position="147"/>
    </location>
    <ligand>
        <name>FMN</name>
        <dbReference type="ChEBI" id="CHEBI:58210"/>
    </ligand>
</feature>
<feature type="binding site" evidence="1">
    <location>
        <position position="180"/>
    </location>
    <ligand>
        <name>FMN</name>
        <dbReference type="ChEBI" id="CHEBI:58210"/>
    </ligand>
</feature>
<feature type="binding site" evidence="1">
    <location>
        <position position="180"/>
    </location>
    <ligand>
        <name>substrate</name>
    </ligand>
</feature>
<feature type="binding site" evidence="1">
    <location>
        <position position="185"/>
    </location>
    <ligand>
        <name>substrate</name>
    </ligand>
</feature>
<feature type="binding site" evidence="1">
    <location>
        <position position="225"/>
    </location>
    <ligand>
        <name>FMN</name>
        <dbReference type="ChEBI" id="CHEBI:58210"/>
    </ligand>
</feature>
<feature type="binding site" evidence="1">
    <location>
        <position position="253"/>
    </location>
    <ligand>
        <name>FMN</name>
        <dbReference type="ChEBI" id="CHEBI:58210"/>
    </ligand>
</feature>
<feature type="binding site" evidence="1">
    <location>
        <begin position="254"/>
        <end position="255"/>
    </location>
    <ligand>
        <name>substrate</name>
    </ligand>
</feature>
<feature type="binding site" evidence="1">
    <location>
        <position position="276"/>
    </location>
    <ligand>
        <name>FMN</name>
        <dbReference type="ChEBI" id="CHEBI:58210"/>
    </ligand>
</feature>
<feature type="binding site" evidence="1">
    <location>
        <position position="305"/>
    </location>
    <ligand>
        <name>FMN</name>
        <dbReference type="ChEBI" id="CHEBI:58210"/>
    </ligand>
</feature>
<feature type="binding site" evidence="1">
    <location>
        <begin position="326"/>
        <end position="327"/>
    </location>
    <ligand>
        <name>FMN</name>
        <dbReference type="ChEBI" id="CHEBI:58210"/>
    </ligand>
</feature>
<dbReference type="EC" id="1.3.5.2" evidence="1"/>
<dbReference type="EMBL" id="CP000542">
    <property type="protein sequence ID" value="ABM57688.1"/>
    <property type="molecule type" value="Genomic_DNA"/>
</dbReference>
<dbReference type="RefSeq" id="WP_011809694.1">
    <property type="nucleotide sequence ID" value="NC_008786.1"/>
</dbReference>
<dbReference type="SMR" id="A1WJ81"/>
<dbReference type="STRING" id="391735.Veis_1935"/>
<dbReference type="GeneID" id="76460532"/>
<dbReference type="KEGG" id="vei:Veis_1935"/>
<dbReference type="eggNOG" id="COG0167">
    <property type="taxonomic scope" value="Bacteria"/>
</dbReference>
<dbReference type="HOGENOM" id="CLU_013640_2_0_4"/>
<dbReference type="OrthoDB" id="9802377at2"/>
<dbReference type="UniPathway" id="UPA00070">
    <property type="reaction ID" value="UER00946"/>
</dbReference>
<dbReference type="Proteomes" id="UP000000374">
    <property type="component" value="Chromosome"/>
</dbReference>
<dbReference type="GO" id="GO:0005737">
    <property type="term" value="C:cytoplasm"/>
    <property type="evidence" value="ECO:0007669"/>
    <property type="project" value="InterPro"/>
</dbReference>
<dbReference type="GO" id="GO:0005886">
    <property type="term" value="C:plasma membrane"/>
    <property type="evidence" value="ECO:0007669"/>
    <property type="project" value="UniProtKB-SubCell"/>
</dbReference>
<dbReference type="GO" id="GO:0106430">
    <property type="term" value="F:dihydroorotate dehydrogenase (quinone) activity"/>
    <property type="evidence" value="ECO:0007669"/>
    <property type="project" value="UniProtKB-EC"/>
</dbReference>
<dbReference type="GO" id="GO:0006207">
    <property type="term" value="P:'de novo' pyrimidine nucleobase biosynthetic process"/>
    <property type="evidence" value="ECO:0007669"/>
    <property type="project" value="InterPro"/>
</dbReference>
<dbReference type="GO" id="GO:0044205">
    <property type="term" value="P:'de novo' UMP biosynthetic process"/>
    <property type="evidence" value="ECO:0007669"/>
    <property type="project" value="UniProtKB-UniRule"/>
</dbReference>
<dbReference type="CDD" id="cd04738">
    <property type="entry name" value="DHOD_2_like"/>
    <property type="match status" value="1"/>
</dbReference>
<dbReference type="Gene3D" id="3.20.20.70">
    <property type="entry name" value="Aldolase class I"/>
    <property type="match status" value="1"/>
</dbReference>
<dbReference type="HAMAP" id="MF_00225">
    <property type="entry name" value="DHO_dh_type2"/>
    <property type="match status" value="1"/>
</dbReference>
<dbReference type="InterPro" id="IPR013785">
    <property type="entry name" value="Aldolase_TIM"/>
</dbReference>
<dbReference type="InterPro" id="IPR050074">
    <property type="entry name" value="DHO_dehydrogenase"/>
</dbReference>
<dbReference type="InterPro" id="IPR005719">
    <property type="entry name" value="Dihydroorotate_DH_2"/>
</dbReference>
<dbReference type="InterPro" id="IPR005720">
    <property type="entry name" value="Dihydroorotate_DH_cat"/>
</dbReference>
<dbReference type="InterPro" id="IPR001295">
    <property type="entry name" value="Dihydroorotate_DH_CS"/>
</dbReference>
<dbReference type="NCBIfam" id="NF003644">
    <property type="entry name" value="PRK05286.1-1"/>
    <property type="match status" value="1"/>
</dbReference>
<dbReference type="NCBIfam" id="NF003645">
    <property type="entry name" value="PRK05286.1-2"/>
    <property type="match status" value="1"/>
</dbReference>
<dbReference type="NCBIfam" id="NF003646">
    <property type="entry name" value="PRK05286.1-4"/>
    <property type="match status" value="1"/>
</dbReference>
<dbReference type="NCBIfam" id="NF003652">
    <property type="entry name" value="PRK05286.2-5"/>
    <property type="match status" value="1"/>
</dbReference>
<dbReference type="NCBIfam" id="TIGR01036">
    <property type="entry name" value="pyrD_sub2"/>
    <property type="match status" value="1"/>
</dbReference>
<dbReference type="PANTHER" id="PTHR48109:SF4">
    <property type="entry name" value="DIHYDROOROTATE DEHYDROGENASE (QUINONE), MITOCHONDRIAL"/>
    <property type="match status" value="1"/>
</dbReference>
<dbReference type="PANTHER" id="PTHR48109">
    <property type="entry name" value="DIHYDROOROTATE DEHYDROGENASE (QUINONE), MITOCHONDRIAL-RELATED"/>
    <property type="match status" value="1"/>
</dbReference>
<dbReference type="Pfam" id="PF01180">
    <property type="entry name" value="DHO_dh"/>
    <property type="match status" value="1"/>
</dbReference>
<dbReference type="SUPFAM" id="SSF51395">
    <property type="entry name" value="FMN-linked oxidoreductases"/>
    <property type="match status" value="1"/>
</dbReference>
<dbReference type="PROSITE" id="PS00911">
    <property type="entry name" value="DHODEHASE_1"/>
    <property type="match status" value="1"/>
</dbReference>
<dbReference type="PROSITE" id="PS00912">
    <property type="entry name" value="DHODEHASE_2"/>
    <property type="match status" value="1"/>
</dbReference>